<keyword id="KW-0687">Ribonucleoprotein</keyword>
<keyword id="KW-0689">Ribosomal protein</keyword>
<keyword id="KW-0694">RNA-binding</keyword>
<keyword id="KW-0699">rRNA-binding</keyword>
<gene>
    <name evidence="1" type="primary">rpsE</name>
    <name type="ordered locus">PEPE_1401</name>
</gene>
<protein>
    <recommendedName>
        <fullName evidence="1">Small ribosomal subunit protein uS5</fullName>
    </recommendedName>
    <alternativeName>
        <fullName evidence="2">30S ribosomal protein S5</fullName>
    </alternativeName>
</protein>
<evidence type="ECO:0000255" key="1">
    <source>
        <dbReference type="HAMAP-Rule" id="MF_01307"/>
    </source>
</evidence>
<evidence type="ECO:0000305" key="2"/>
<feature type="chain" id="PRO_0000323166" description="Small ribosomal subunit protein uS5">
    <location>
        <begin position="1"/>
        <end position="167"/>
    </location>
</feature>
<feature type="domain" description="S5 DRBM" evidence="1">
    <location>
        <begin position="12"/>
        <end position="75"/>
    </location>
</feature>
<reference key="1">
    <citation type="journal article" date="2006" name="Proc. Natl. Acad. Sci. U.S.A.">
        <title>Comparative genomics of the lactic acid bacteria.</title>
        <authorList>
            <person name="Makarova K.S."/>
            <person name="Slesarev A."/>
            <person name="Wolf Y.I."/>
            <person name="Sorokin A."/>
            <person name="Mirkin B."/>
            <person name="Koonin E.V."/>
            <person name="Pavlov A."/>
            <person name="Pavlova N."/>
            <person name="Karamychev V."/>
            <person name="Polouchine N."/>
            <person name="Shakhova V."/>
            <person name="Grigoriev I."/>
            <person name="Lou Y."/>
            <person name="Rohksar D."/>
            <person name="Lucas S."/>
            <person name="Huang K."/>
            <person name="Goodstein D.M."/>
            <person name="Hawkins T."/>
            <person name="Plengvidhya V."/>
            <person name="Welker D."/>
            <person name="Hughes J."/>
            <person name="Goh Y."/>
            <person name="Benson A."/>
            <person name="Baldwin K."/>
            <person name="Lee J.-H."/>
            <person name="Diaz-Muniz I."/>
            <person name="Dosti B."/>
            <person name="Smeianov V."/>
            <person name="Wechter W."/>
            <person name="Barabote R."/>
            <person name="Lorca G."/>
            <person name="Altermann E."/>
            <person name="Barrangou R."/>
            <person name="Ganesan B."/>
            <person name="Xie Y."/>
            <person name="Rawsthorne H."/>
            <person name="Tamir D."/>
            <person name="Parker C."/>
            <person name="Breidt F."/>
            <person name="Broadbent J.R."/>
            <person name="Hutkins R."/>
            <person name="O'Sullivan D."/>
            <person name="Steele J."/>
            <person name="Unlu G."/>
            <person name="Saier M.H. Jr."/>
            <person name="Klaenhammer T."/>
            <person name="Richardson P."/>
            <person name="Kozyavkin S."/>
            <person name="Weimer B.C."/>
            <person name="Mills D.A."/>
        </authorList>
    </citation>
    <scope>NUCLEOTIDE SEQUENCE [LARGE SCALE GENOMIC DNA]</scope>
    <source>
        <strain>ATCC 25745 / CCUG 21536 / LMG 10740 / 183-1w</strain>
    </source>
</reference>
<comment type="function">
    <text evidence="1">With S4 and S12 plays an important role in translational accuracy.</text>
</comment>
<comment type="function">
    <text evidence="1">Located at the back of the 30S subunit body where it stabilizes the conformation of the head with respect to the body.</text>
</comment>
<comment type="subunit">
    <text evidence="1">Part of the 30S ribosomal subunit. Contacts proteins S4 and S8.</text>
</comment>
<comment type="domain">
    <text>The N-terminal domain interacts with the head of the 30S subunit; the C-terminal domain interacts with the body and contacts protein S4. The interaction surface between S4 and S5 is involved in control of translational fidelity.</text>
</comment>
<comment type="similarity">
    <text evidence="1">Belongs to the universal ribosomal protein uS5 family.</text>
</comment>
<accession>Q03ED3</accession>
<proteinExistence type="inferred from homology"/>
<dbReference type="EMBL" id="CP000422">
    <property type="protein sequence ID" value="ABJ68439.1"/>
    <property type="molecule type" value="Genomic_DNA"/>
</dbReference>
<dbReference type="RefSeq" id="WP_002833344.1">
    <property type="nucleotide sequence ID" value="NC_008525.1"/>
</dbReference>
<dbReference type="SMR" id="Q03ED3"/>
<dbReference type="STRING" id="278197.PEPE_1401"/>
<dbReference type="GeneID" id="33061456"/>
<dbReference type="KEGG" id="ppe:PEPE_1401"/>
<dbReference type="eggNOG" id="COG0098">
    <property type="taxonomic scope" value="Bacteria"/>
</dbReference>
<dbReference type="HOGENOM" id="CLU_065898_2_2_9"/>
<dbReference type="OrthoDB" id="9809045at2"/>
<dbReference type="Proteomes" id="UP000000773">
    <property type="component" value="Chromosome"/>
</dbReference>
<dbReference type="GO" id="GO:0015935">
    <property type="term" value="C:small ribosomal subunit"/>
    <property type="evidence" value="ECO:0007669"/>
    <property type="project" value="InterPro"/>
</dbReference>
<dbReference type="GO" id="GO:0019843">
    <property type="term" value="F:rRNA binding"/>
    <property type="evidence" value="ECO:0007669"/>
    <property type="project" value="UniProtKB-UniRule"/>
</dbReference>
<dbReference type="GO" id="GO:0003735">
    <property type="term" value="F:structural constituent of ribosome"/>
    <property type="evidence" value="ECO:0007669"/>
    <property type="project" value="InterPro"/>
</dbReference>
<dbReference type="GO" id="GO:0006412">
    <property type="term" value="P:translation"/>
    <property type="evidence" value="ECO:0007669"/>
    <property type="project" value="UniProtKB-UniRule"/>
</dbReference>
<dbReference type="FunFam" id="3.30.160.20:FF:000001">
    <property type="entry name" value="30S ribosomal protein S5"/>
    <property type="match status" value="1"/>
</dbReference>
<dbReference type="FunFam" id="3.30.230.10:FF:000002">
    <property type="entry name" value="30S ribosomal protein S5"/>
    <property type="match status" value="1"/>
</dbReference>
<dbReference type="Gene3D" id="3.30.160.20">
    <property type="match status" value="1"/>
</dbReference>
<dbReference type="Gene3D" id="3.30.230.10">
    <property type="match status" value="1"/>
</dbReference>
<dbReference type="HAMAP" id="MF_01307_B">
    <property type="entry name" value="Ribosomal_uS5_B"/>
    <property type="match status" value="1"/>
</dbReference>
<dbReference type="InterPro" id="IPR020568">
    <property type="entry name" value="Ribosomal_Su5_D2-typ_SF"/>
</dbReference>
<dbReference type="InterPro" id="IPR000851">
    <property type="entry name" value="Ribosomal_uS5"/>
</dbReference>
<dbReference type="InterPro" id="IPR005712">
    <property type="entry name" value="Ribosomal_uS5_bac-type"/>
</dbReference>
<dbReference type="InterPro" id="IPR005324">
    <property type="entry name" value="Ribosomal_uS5_C"/>
</dbReference>
<dbReference type="InterPro" id="IPR013810">
    <property type="entry name" value="Ribosomal_uS5_N"/>
</dbReference>
<dbReference type="InterPro" id="IPR018192">
    <property type="entry name" value="Ribosomal_uS5_N_CS"/>
</dbReference>
<dbReference type="InterPro" id="IPR014721">
    <property type="entry name" value="Ribsml_uS5_D2-typ_fold_subgr"/>
</dbReference>
<dbReference type="NCBIfam" id="TIGR01021">
    <property type="entry name" value="rpsE_bact"/>
    <property type="match status" value="1"/>
</dbReference>
<dbReference type="PANTHER" id="PTHR48277">
    <property type="entry name" value="MITOCHONDRIAL RIBOSOMAL PROTEIN S5"/>
    <property type="match status" value="1"/>
</dbReference>
<dbReference type="PANTHER" id="PTHR48277:SF1">
    <property type="entry name" value="MITOCHONDRIAL RIBOSOMAL PROTEIN S5"/>
    <property type="match status" value="1"/>
</dbReference>
<dbReference type="Pfam" id="PF00333">
    <property type="entry name" value="Ribosomal_S5"/>
    <property type="match status" value="1"/>
</dbReference>
<dbReference type="Pfam" id="PF03719">
    <property type="entry name" value="Ribosomal_S5_C"/>
    <property type="match status" value="1"/>
</dbReference>
<dbReference type="SUPFAM" id="SSF54768">
    <property type="entry name" value="dsRNA-binding domain-like"/>
    <property type="match status" value="1"/>
</dbReference>
<dbReference type="SUPFAM" id="SSF54211">
    <property type="entry name" value="Ribosomal protein S5 domain 2-like"/>
    <property type="match status" value="1"/>
</dbReference>
<dbReference type="PROSITE" id="PS00585">
    <property type="entry name" value="RIBOSOMAL_S5"/>
    <property type="match status" value="1"/>
</dbReference>
<dbReference type="PROSITE" id="PS50881">
    <property type="entry name" value="S5_DSRBD"/>
    <property type="match status" value="1"/>
</dbReference>
<sequence length="167" mass="17551">MSKFIDPEKLEIEDRVVAINRVTKVVKGGRRLRFAALVVVGDKNGHVGFGTGKAQEVPEAIRKAVETARKSLIEVPIVGTTLPHEAVGVYGGGRILMKPALEGSGVAAGGAVRAVMELAGIDDVTSKRLGSNTAVNVVRATFEGLKSMRNAEEVAALRGVSVDHLAE</sequence>
<organism>
    <name type="scientific">Pediococcus pentosaceus (strain ATCC 25745 / CCUG 21536 / LMG 10740 / 183-1w)</name>
    <dbReference type="NCBI Taxonomy" id="278197"/>
    <lineage>
        <taxon>Bacteria</taxon>
        <taxon>Bacillati</taxon>
        <taxon>Bacillota</taxon>
        <taxon>Bacilli</taxon>
        <taxon>Lactobacillales</taxon>
        <taxon>Lactobacillaceae</taxon>
        <taxon>Pediococcus</taxon>
    </lineage>
</organism>
<name>RS5_PEDPA</name>